<reference key="1">
    <citation type="journal article" date="2000" name="Proc. Natl. Acad. Sci. U.S.A.">
        <title>Isolation and characterization of BEN, a member of the TFII-I family of DNA-binding proteins containing distinct helix-loop-helix domains.</title>
        <authorList>
            <person name="Bayarsaihan D."/>
            <person name="Ruddle F.H."/>
        </authorList>
    </citation>
    <scope>NUCLEOTIDE SEQUENCE [MRNA] (ISOFORM 1)</scope>
    <source>
        <strain>Swiss Webster / NIH</strain>
    </source>
</reference>
<reference key="2">
    <citation type="journal article" date="2001" name="Genomics">
        <title>Integration of a c-myc transgene results in disruption of the mouse Gtf2ird1 gene, the homologue of the human GTF2IRD1 gene hemizygously deleted in Williams-Beuren syndrome.</title>
        <authorList>
            <person name="Durkin M.E."/>
            <person name="Keck-Waggoner C.L."/>
            <person name="Popescu N.C."/>
            <person name="Thorgeirsson S.S."/>
        </authorList>
    </citation>
    <scope>NUCLEOTIDE SEQUENCE [MRNA] (ISOFORM 2)</scope>
    <source>
        <strain>C57BL/6J</strain>
    </source>
</reference>
<reference key="3">
    <citation type="journal article" date="2002" name="Genomics">
        <title>Genomic organization of the genes Gtf2ird1, Gtf2i, and Ncf1 at the mouse chromosome 5 region syntenic to the human chromosome 7q11.23 Williams syndrome critical region.</title>
        <authorList>
            <person name="Bayarsaihan D."/>
            <person name="Dunai J."/>
            <person name="Greally J.M."/>
            <person name="Kawasaki K."/>
            <person name="Sumiyama K."/>
            <person name="Enkhmandakh B."/>
            <person name="Shimizu N."/>
            <person name="Ruddle F.H."/>
        </authorList>
    </citation>
    <scope>NUCLEOTIDE SEQUENCE [MRNA] (ISOFORMS 1; 2 AND 3)</scope>
    <source>
        <strain>129/SvJ</strain>
    </source>
</reference>
<reference key="4">
    <citation type="journal article" date="2003" name="Biochem. J.">
        <title>Regulation of alternative splicing of Gtf2ird1 and its impact on slow muscle promoter activity.</title>
        <authorList>
            <person name="Tay E.S.E."/>
            <person name="Guven K.L."/>
            <person name="Subramaniam N."/>
            <person name="Polly P."/>
            <person name="Issa L.L."/>
            <person name="Gunning P.W."/>
            <person name="Hardeman E.C."/>
        </authorList>
    </citation>
    <scope>NUCLEOTIDE SEQUENCE [MRNA] (ISOFORMS 1; 2; 3; 4; 5; 6; 7; 8; 9 AND 10)</scope>
    <scope>SUBCELLULAR LOCATION</scope>
    <source>
        <strain>BALB/cJ</strain>
        <strain>C57BL/6 X DBA/2</strain>
        <tissue>Skeletal muscle</tissue>
    </source>
</reference>
<reference key="5">
    <citation type="submission" date="2000-07" db="EMBL/GenBank/DDBJ databases">
        <authorList>
            <person name="Green E.D."/>
        </authorList>
    </citation>
    <scope>NUCLEOTIDE SEQUENCE [GENOMIC DNA] (ISOFORM 3)</scope>
    <source>
        <strain>129/Sv</strain>
    </source>
</reference>
<reference key="6">
    <citation type="journal article" date="2001" name="Proc. Natl. Acad. Sci. U.S.A.">
        <title>Repression of TFII-I-dependent transcription by nuclear exclusion.</title>
        <authorList>
            <person name="Tussie-Luna M.I."/>
            <person name="Bayarsaihan D."/>
            <person name="Ruddle F.H."/>
            <person name="Roy A.L."/>
        </authorList>
    </citation>
    <scope>FUNCTION</scope>
</reference>
<gene>
    <name type="primary">Gtf2ird1</name>
    <name type="synonym">Ben</name>
</gene>
<sequence length="1104" mass="123483">MALLGKHCDIPTNGCGSERWNSTFARKDELINSLVSALDSMCSALSKLNTEVACVAVHNESVFVMGTEKGRVFLNTRKELQSDFLRFCRGPLWNDPEAGHPKKVQRCEGGGRSLPRSSLEQCSDVYLLQKMVEEVFDVLYSEAMGRATVVPLPYERLLREPGLLAVQGLPEGLAFRRPAEYDPKALMAILEHSHRIRFKLRRPPDDGGQDTKALVEMNGISLLPKGSRDCGLHGQASKVAPQDLTPTATPSSMANFLYSTSMPNHTIRELKQEVPTCPLTPSDLGMGWPVPEPHVPSTQDFSDCCGQTPAGPAGPLIQNVHASKRILFSIVHDKSEKWDPFIKEMEDINTLRECVQILFNSRYAEALGLDHMVPVPYRKIACDPEAVEIVGIPDKIPFKRPCTYGVPKLKRILEERHSIHFIIKRMFDERIFTGNKFTKDPMKLEPASPPEDTSTEVCRDSMLDLAGTAWSDMSSVSEDCGPGTSGEIAMLRPIKIEPEELDIIQVTVSDPSPTSEEMTDSLPGHLPSEDSGYGMEMPADKGPSEEPWSEERPAEESPGDVIRPLRKQVEMLFNTKYAKAIGTSEPVKVPYSKFLMHPEELFVLGLPEGISLRRPNCFGIAKLRKILEASNSIQFVIKRPELLTDGVKEPVLDTQERDSWDRLVDETPKRQGLQENYNTRLSRIDIANTLREQVQDLFNKKYGEALGIKYPVQVPYKRIKSNPGSVIIEGLPPGIPFRKPCTFGSQNLERILSVADKIKFTVTRPFQGLIPKPETKILTTGHEAGKTTRPRRLQQDTWQPDEDDANRLGEKVILREQVKELFNEKYGEALGLNRPVLVPYKLIRDSPDAVEVKGLPDDIPFRNPNTYDIHRLEKILKAREHVRMVIINQLQPFAEVCNDPKVPEEDDSNKLGKKVILREQVKELFNEKYGEALGLNRPVLVPYKLIRDSPDAVEVKGLPDDIPFRNPNTYDIHRLEKILKAREHVRMVIINQLQPFGDVCNNAKVPAKDNIPKRKRKRVSEGNSVSSSSSSSSSSSNPESVASTNQISLVVKSRGSELHPNSVWPLPLPRAGPSTAPGTGRHWALRGTQPTTEGQAHPLVLPTR</sequence>
<organism>
    <name type="scientific">Mus musculus</name>
    <name type="common">Mouse</name>
    <dbReference type="NCBI Taxonomy" id="10090"/>
    <lineage>
        <taxon>Eukaryota</taxon>
        <taxon>Metazoa</taxon>
        <taxon>Chordata</taxon>
        <taxon>Craniata</taxon>
        <taxon>Vertebrata</taxon>
        <taxon>Euteleostomi</taxon>
        <taxon>Mammalia</taxon>
        <taxon>Eutheria</taxon>
        <taxon>Euarchontoglires</taxon>
        <taxon>Glires</taxon>
        <taxon>Rodentia</taxon>
        <taxon>Myomorpha</taxon>
        <taxon>Muroidea</taxon>
        <taxon>Muridae</taxon>
        <taxon>Murinae</taxon>
        <taxon>Mus</taxon>
        <taxon>Mus</taxon>
    </lineage>
</organism>
<proteinExistence type="evidence at transcript level"/>
<evidence type="ECO:0000250" key="1"/>
<evidence type="ECO:0000250" key="2">
    <source>
        <dbReference type="UniProtKB" id="Q9UHL9"/>
    </source>
</evidence>
<evidence type="ECO:0000255" key="3">
    <source>
        <dbReference type="PROSITE-ProRule" id="PRU00484"/>
    </source>
</evidence>
<evidence type="ECO:0000256" key="4">
    <source>
        <dbReference type="SAM" id="MobiDB-lite"/>
    </source>
</evidence>
<evidence type="ECO:0000269" key="5">
    <source>
    </source>
</evidence>
<evidence type="ECO:0000269" key="6">
    <source>
    </source>
</evidence>
<evidence type="ECO:0000303" key="7">
    <source>
    </source>
</evidence>
<evidence type="ECO:0000303" key="8">
    <source>
    </source>
</evidence>
<evidence type="ECO:0000303" key="9">
    <source>
    </source>
</evidence>
<evidence type="ECO:0000305" key="10"/>
<dbReference type="EMBL" id="AF260133">
    <property type="protein sequence ID" value="AAF78367.1"/>
    <property type="status" value="ALT_FRAME"/>
    <property type="molecule type" value="mRNA"/>
</dbReference>
<dbReference type="EMBL" id="AF257475">
    <property type="protein sequence ID" value="AAG44655.1"/>
    <property type="molecule type" value="mRNA"/>
</dbReference>
<dbReference type="EMBL" id="AY030287">
    <property type="protein sequence ID" value="AAK49782.1"/>
    <property type="molecule type" value="mRNA"/>
</dbReference>
<dbReference type="EMBL" id="AY030288">
    <property type="protein sequence ID" value="AAK49783.1"/>
    <property type="molecule type" value="mRNA"/>
</dbReference>
<dbReference type="EMBL" id="AY030289">
    <property type="protein sequence ID" value="AAK49784.1"/>
    <property type="molecule type" value="mRNA"/>
</dbReference>
<dbReference type="EMBL" id="AF247161">
    <property type="protein sequence ID" value="AAL68980.1"/>
    <property type="molecule type" value="mRNA"/>
</dbReference>
<dbReference type="EMBL" id="AF343348">
    <property type="protein sequence ID" value="AAM02920.1"/>
    <property type="molecule type" value="mRNA"/>
</dbReference>
<dbReference type="EMBL" id="AF343349">
    <property type="protein sequence ID" value="AAM02921.1"/>
    <property type="molecule type" value="mRNA"/>
</dbReference>
<dbReference type="EMBL" id="AF343350">
    <property type="protein sequence ID" value="AAM02922.1"/>
    <property type="molecule type" value="mRNA"/>
</dbReference>
<dbReference type="EMBL" id="AF343351">
    <property type="protein sequence ID" value="AAM02923.1"/>
    <property type="molecule type" value="mRNA"/>
</dbReference>
<dbReference type="EMBL" id="AF497637">
    <property type="protein sequence ID" value="AAP30728.1"/>
    <property type="molecule type" value="mRNA"/>
</dbReference>
<dbReference type="EMBL" id="AF497638">
    <property type="protein sequence ID" value="AAP30729.1"/>
    <property type="molecule type" value="mRNA"/>
</dbReference>
<dbReference type="EMBL" id="AF497639">
    <property type="protein sequence ID" value="AAP30730.1"/>
    <property type="molecule type" value="mRNA"/>
</dbReference>
<dbReference type="EMBL" id="AF497640">
    <property type="protein sequence ID" value="AAP30731.1"/>
    <property type="molecule type" value="mRNA"/>
</dbReference>
<dbReference type="EMBL" id="AF497641">
    <property type="protein sequence ID" value="AAP30732.1"/>
    <property type="molecule type" value="mRNA"/>
</dbReference>
<dbReference type="EMBL" id="AF497642">
    <property type="protein sequence ID" value="AAP30733.1"/>
    <property type="molecule type" value="mRNA"/>
</dbReference>
<dbReference type="EMBL" id="AF289666">
    <property type="protein sequence ID" value="AAF99337.1"/>
    <property type="molecule type" value="Genomic_DNA"/>
</dbReference>
<dbReference type="EMBL" id="AF289667">
    <property type="protein sequence ID" value="AAF99339.1"/>
    <property type="molecule type" value="Genomic_DNA"/>
</dbReference>
<dbReference type="CCDS" id="CCDS39302.1">
    <molecule id="Q9JI57-7"/>
</dbReference>
<dbReference type="CCDS" id="CCDS39303.1">
    <molecule id="Q9JI57-9"/>
</dbReference>
<dbReference type="CCDS" id="CCDS39305.1">
    <molecule id="Q9JI57-2"/>
</dbReference>
<dbReference type="CCDS" id="CCDS39306.1">
    <molecule id="Q9JI57-5"/>
</dbReference>
<dbReference type="CCDS" id="CCDS39307.1">
    <molecule id="Q9JI57-1"/>
</dbReference>
<dbReference type="CCDS" id="CCDS51657.1">
    <molecule id="Q9JI57-8"/>
</dbReference>
<dbReference type="CCDS" id="CCDS80420.1">
    <molecule id="Q9JI57-10"/>
</dbReference>
<dbReference type="CCDS" id="CCDS84967.1">
    <molecule id="Q9JI57-6"/>
</dbReference>
<dbReference type="RefSeq" id="NP_001074931.1">
    <molecule id="Q9JI57-1"/>
    <property type="nucleotide sequence ID" value="NM_001081462.3"/>
</dbReference>
<dbReference type="RefSeq" id="NP_001074932.1">
    <molecule id="Q9JI57-5"/>
    <property type="nucleotide sequence ID" value="NM_001081463.3"/>
</dbReference>
<dbReference type="RefSeq" id="NP_001074935.1">
    <molecule id="Q9JI57-7"/>
    <property type="nucleotide sequence ID" value="NM_001081466.3"/>
</dbReference>
<dbReference type="RefSeq" id="NP_001074936.1">
    <molecule id="Q9JI57-8"/>
    <property type="nucleotide sequence ID" value="NM_001081467.3"/>
</dbReference>
<dbReference type="RefSeq" id="NP_001074937.1">
    <molecule id="Q9JI57-9"/>
    <property type="nucleotide sequence ID" value="NM_001081468.3"/>
</dbReference>
<dbReference type="RefSeq" id="NP_001074938.1">
    <molecule id="Q9JI57-10"/>
    <property type="nucleotide sequence ID" value="NM_001081469.3"/>
</dbReference>
<dbReference type="RefSeq" id="NP_001074939.1">
    <molecule id="Q9JI57-3"/>
    <property type="nucleotide sequence ID" value="NM_001081470.3"/>
</dbReference>
<dbReference type="RefSeq" id="NP_001231865.1">
    <molecule id="Q9JI57-4"/>
    <property type="nucleotide sequence ID" value="NM_001244936.2"/>
</dbReference>
<dbReference type="RefSeq" id="NP_001334417.1">
    <molecule id="Q9JI57-6"/>
    <property type="nucleotide sequence ID" value="NM_001347488.2"/>
</dbReference>
<dbReference type="RefSeq" id="NP_065064.2">
    <molecule id="Q9JI57-2"/>
    <property type="nucleotide sequence ID" value="NM_020331.4"/>
</dbReference>
<dbReference type="RefSeq" id="XP_017176527.1">
    <molecule id="Q9JI57-1"/>
    <property type="nucleotide sequence ID" value="XM_017321038.2"/>
</dbReference>
<dbReference type="RefSeq" id="XP_017176528.1">
    <molecule id="Q9JI57-5"/>
    <property type="nucleotide sequence ID" value="XM_017321039.3"/>
</dbReference>
<dbReference type="RefSeq" id="XP_030110590.1">
    <molecule id="Q9JI57-6"/>
    <property type="nucleotide sequence ID" value="XM_030254730.2"/>
</dbReference>
<dbReference type="RefSeq" id="XP_036021264.1">
    <molecule id="Q9JI57-6"/>
    <property type="nucleotide sequence ID" value="XM_036165371.1"/>
</dbReference>
<dbReference type="SMR" id="Q9JI57"/>
<dbReference type="FunCoup" id="Q9JI57">
    <property type="interactions" value="2845"/>
</dbReference>
<dbReference type="IntAct" id="Q9JI57">
    <property type="interactions" value="2"/>
</dbReference>
<dbReference type="MINT" id="Q9JI57"/>
<dbReference type="STRING" id="10090.ENSMUSP00000098217"/>
<dbReference type="GlyGen" id="Q9JI57">
    <property type="glycosylation" value="1 site"/>
</dbReference>
<dbReference type="iPTMnet" id="Q9JI57"/>
<dbReference type="PhosphoSitePlus" id="Q9JI57"/>
<dbReference type="PaxDb" id="10090-ENSMUSP00000098217"/>
<dbReference type="ProteomicsDB" id="271358">
    <molecule id="Q9JI57-1"/>
</dbReference>
<dbReference type="ProteomicsDB" id="271359">
    <molecule id="Q9JI57-2"/>
</dbReference>
<dbReference type="ProteomicsDB" id="271360">
    <molecule id="Q9JI57-3"/>
</dbReference>
<dbReference type="ProteomicsDB" id="271361">
    <molecule id="Q9JI57-4"/>
</dbReference>
<dbReference type="ProteomicsDB" id="271362">
    <molecule id="Q9JI57-5"/>
</dbReference>
<dbReference type="ProteomicsDB" id="271363">
    <molecule id="Q9JI57-6"/>
</dbReference>
<dbReference type="ProteomicsDB" id="271364">
    <molecule id="Q9JI57-7"/>
</dbReference>
<dbReference type="ProteomicsDB" id="271365">
    <molecule id="Q9JI57-8"/>
</dbReference>
<dbReference type="ProteomicsDB" id="271366">
    <molecule id="Q9JI57-9"/>
</dbReference>
<dbReference type="ProteomicsDB" id="271367">
    <molecule id="Q9JI57-10"/>
</dbReference>
<dbReference type="Antibodypedia" id="14624">
    <property type="antibodies" value="388 antibodies from 32 providers"/>
</dbReference>
<dbReference type="DNASU" id="57080"/>
<dbReference type="Ensembl" id="ENSMUST00000073161.12">
    <molecule id="Q9JI57-2"/>
    <property type="protein sequence ID" value="ENSMUSP00000072904.6"/>
    <property type="gene ID" value="ENSMUSG00000023079.15"/>
</dbReference>
<dbReference type="Ensembl" id="ENSMUST00000074114.12">
    <molecule id="Q9JI57-8"/>
    <property type="protein sequence ID" value="ENSMUSP00000073752.6"/>
    <property type="gene ID" value="ENSMUSG00000023079.15"/>
</dbReference>
<dbReference type="Ensembl" id="ENSMUST00000100650.10">
    <molecule id="Q9JI57-5"/>
    <property type="protein sequence ID" value="ENSMUSP00000098215.4"/>
    <property type="gene ID" value="ENSMUSG00000023079.15"/>
</dbReference>
<dbReference type="Ensembl" id="ENSMUST00000100652.10">
    <molecule id="Q9JI57-1"/>
    <property type="protein sequence ID" value="ENSMUSP00000098217.4"/>
    <property type="gene ID" value="ENSMUSG00000023079.15"/>
</dbReference>
<dbReference type="Ensembl" id="ENSMUST00000100654.10">
    <molecule id="Q9JI57-9"/>
    <property type="protein sequence ID" value="ENSMUSP00000098219.4"/>
    <property type="gene ID" value="ENSMUSG00000023079.15"/>
</dbReference>
<dbReference type="Ensembl" id="ENSMUST00000111245.9">
    <molecule id="Q9JI57-7"/>
    <property type="protein sequence ID" value="ENSMUSP00000106876.3"/>
    <property type="gene ID" value="ENSMUSG00000023079.15"/>
</dbReference>
<dbReference type="Ensembl" id="ENSMUST00000167084.9">
    <molecule id="Q9JI57-10"/>
    <property type="protein sequence ID" value="ENSMUSP00000132882.3"/>
    <property type="gene ID" value="ENSMUSG00000023079.15"/>
</dbReference>
<dbReference type="Ensembl" id="ENSMUST00000200944.4">
    <molecule id="Q9JI57-10"/>
    <property type="protein sequence ID" value="ENSMUSP00000143848.2"/>
    <property type="gene ID" value="ENSMUSG00000023079.15"/>
</dbReference>
<dbReference type="Ensembl" id="ENSMUST00000202554.4">
    <molecule id="Q9JI57-6"/>
    <property type="protein sequence ID" value="ENSMUSP00000143809.2"/>
    <property type="gene ID" value="ENSMUSG00000023079.15"/>
</dbReference>
<dbReference type="GeneID" id="57080"/>
<dbReference type="KEGG" id="mmu:57080"/>
<dbReference type="UCSC" id="uc008zvv.2">
    <molecule id="Q9JI57-2"/>
    <property type="organism name" value="mouse"/>
</dbReference>
<dbReference type="UCSC" id="uc008zvw.2">
    <molecule id="Q9JI57-7"/>
    <property type="organism name" value="mouse"/>
</dbReference>
<dbReference type="UCSC" id="uc008zvx.2">
    <molecule id="Q9JI57-3"/>
    <property type="organism name" value="mouse"/>
</dbReference>
<dbReference type="UCSC" id="uc008zvy.2">
    <molecule id="Q9JI57-10"/>
    <property type="organism name" value="mouse"/>
</dbReference>
<dbReference type="UCSC" id="uc008zvz.2">
    <molecule id="Q9JI57-9"/>
    <property type="organism name" value="mouse"/>
</dbReference>
<dbReference type="UCSC" id="uc008zwa.2">
    <molecule id="Q9JI57-8"/>
    <property type="organism name" value="mouse"/>
</dbReference>
<dbReference type="UCSC" id="uc008zwb.2">
    <molecule id="Q9JI57-6"/>
    <property type="organism name" value="mouse"/>
</dbReference>
<dbReference type="UCSC" id="uc008zwc.2">
    <molecule id="Q9JI57-4"/>
    <property type="organism name" value="mouse"/>
</dbReference>
<dbReference type="UCSC" id="uc008zwd.2">
    <molecule id="Q9JI57-5"/>
    <property type="organism name" value="mouse"/>
</dbReference>
<dbReference type="UCSC" id="uc008zwe.2">
    <molecule id="Q9JI57-1"/>
    <property type="organism name" value="mouse"/>
</dbReference>
<dbReference type="AGR" id="MGI:1861942"/>
<dbReference type="CTD" id="9569"/>
<dbReference type="MGI" id="MGI:1861942">
    <property type="gene designation" value="Gtf2ird1"/>
</dbReference>
<dbReference type="VEuPathDB" id="HostDB:ENSMUSG00000023079"/>
<dbReference type="eggNOG" id="ENOG502QPVX">
    <property type="taxonomic scope" value="Eukaryota"/>
</dbReference>
<dbReference type="GeneTree" id="ENSGT00940000159414"/>
<dbReference type="HOGENOM" id="CLU_014412_0_0_1"/>
<dbReference type="InParanoid" id="Q9JI57"/>
<dbReference type="OMA" id="VFDVLYX"/>
<dbReference type="OrthoDB" id="9876044at2759"/>
<dbReference type="PhylomeDB" id="Q9JI57"/>
<dbReference type="TreeFam" id="TF352524"/>
<dbReference type="BioGRID-ORCS" id="57080">
    <property type="hits" value="3 hits in 80 CRISPR screens"/>
</dbReference>
<dbReference type="ChiTaRS" id="Gtf2ird1">
    <property type="organism name" value="mouse"/>
</dbReference>
<dbReference type="PRO" id="PR:Q9JI57"/>
<dbReference type="Proteomes" id="UP000000589">
    <property type="component" value="Chromosome 5"/>
</dbReference>
<dbReference type="RNAct" id="Q9JI57">
    <property type="molecule type" value="protein"/>
</dbReference>
<dbReference type="Bgee" id="ENSMUSG00000023079">
    <property type="expression patterns" value="Expressed in saccule of membranous labyrinth and 271 other cell types or tissues"/>
</dbReference>
<dbReference type="ExpressionAtlas" id="Q9JI57">
    <property type="expression patterns" value="baseline and differential"/>
</dbReference>
<dbReference type="GO" id="GO:0005829">
    <property type="term" value="C:cytosol"/>
    <property type="evidence" value="ECO:0007669"/>
    <property type="project" value="Ensembl"/>
</dbReference>
<dbReference type="GO" id="GO:0005654">
    <property type="term" value="C:nucleoplasm"/>
    <property type="evidence" value="ECO:0007669"/>
    <property type="project" value="Ensembl"/>
</dbReference>
<dbReference type="GO" id="GO:0005634">
    <property type="term" value="C:nucleus"/>
    <property type="evidence" value="ECO:0000314"/>
    <property type="project" value="MGI"/>
</dbReference>
<dbReference type="GO" id="GO:0003700">
    <property type="term" value="F:DNA-binding transcription factor activity"/>
    <property type="evidence" value="ECO:0000314"/>
    <property type="project" value="MGI"/>
</dbReference>
<dbReference type="GO" id="GO:0001227">
    <property type="term" value="F:DNA-binding transcription repressor activity, RNA polymerase II-specific"/>
    <property type="evidence" value="ECO:0007669"/>
    <property type="project" value="Ensembl"/>
</dbReference>
<dbReference type="GO" id="GO:0000978">
    <property type="term" value="F:RNA polymerase II cis-regulatory region sequence-specific DNA binding"/>
    <property type="evidence" value="ECO:0007669"/>
    <property type="project" value="Ensembl"/>
</dbReference>
<dbReference type="GO" id="GO:0006366">
    <property type="term" value="P:transcription by RNA polymerase II"/>
    <property type="evidence" value="ECO:0007669"/>
    <property type="project" value="InterPro"/>
</dbReference>
<dbReference type="GO" id="GO:0014886">
    <property type="term" value="P:transition between slow and fast fiber"/>
    <property type="evidence" value="ECO:0000314"/>
    <property type="project" value="MGI"/>
</dbReference>
<dbReference type="FunFam" id="3.90.1460.10:FF:000002">
    <property type="entry name" value="General transcription factor II-I isoform 1"/>
    <property type="match status" value="1"/>
</dbReference>
<dbReference type="FunFam" id="3.90.1460.10:FF:000006">
    <property type="entry name" value="General transcription factor II-I repeat domain-containing protein 1"/>
    <property type="match status" value="2"/>
</dbReference>
<dbReference type="FunFam" id="3.90.1460.10:FF:000007">
    <property type="entry name" value="General transcription factor II-I repeat domain-containing protein 1"/>
    <property type="match status" value="1"/>
</dbReference>
<dbReference type="FunFam" id="3.90.1460.10:FF:000008">
    <property type="entry name" value="General transcription factor II-I repeat domain-containing protein 1"/>
    <property type="match status" value="1"/>
</dbReference>
<dbReference type="FunFam" id="3.90.1460.10:FF:000005">
    <property type="entry name" value="general transcription factor II-I repeat domain-containing protein 1"/>
    <property type="match status" value="1"/>
</dbReference>
<dbReference type="Gene3D" id="3.90.1460.10">
    <property type="entry name" value="GTF2I-like"/>
    <property type="match status" value="6"/>
</dbReference>
<dbReference type="InterPro" id="IPR004212">
    <property type="entry name" value="GTF2I"/>
</dbReference>
<dbReference type="InterPro" id="IPR036647">
    <property type="entry name" value="GTF2I-like_rpt_sf"/>
</dbReference>
<dbReference type="InterPro" id="IPR016659">
    <property type="entry name" value="TF_II-I"/>
</dbReference>
<dbReference type="PANTHER" id="PTHR46304">
    <property type="entry name" value="GENERAL TRANSCRIPTION FACTOR II-I REPEAT DOMAIN-CONTAINING PROTEIN 1"/>
    <property type="match status" value="1"/>
</dbReference>
<dbReference type="PANTHER" id="PTHR46304:SF1">
    <property type="entry name" value="GENERAL TRANSCRIPTION FACTOR II-I REPEAT DOMAIN-CONTAINING PROTEIN 1"/>
    <property type="match status" value="1"/>
</dbReference>
<dbReference type="Pfam" id="PF02946">
    <property type="entry name" value="GTF2I"/>
    <property type="match status" value="6"/>
</dbReference>
<dbReference type="PIRSF" id="PIRSF016441">
    <property type="entry name" value="TF_II-I"/>
    <property type="match status" value="1"/>
</dbReference>
<dbReference type="SUPFAM" id="SSF117773">
    <property type="entry name" value="GTF2I-like repeat"/>
    <property type="match status" value="6"/>
</dbReference>
<dbReference type="PROSITE" id="PS51139">
    <property type="entry name" value="GTF2I"/>
    <property type="match status" value="6"/>
</dbReference>
<accession>Q9JI57</accession>
<accession>Q547E0</accession>
<accession>Q80WJ8</accession>
<accession>Q80WJ9</accession>
<accession>Q80WK0</accession>
<accession>Q80WK1</accession>
<accession>Q8R4X5</accession>
<accession>Q8R4X6</accession>
<accession>Q8R4X7</accession>
<accession>Q8R4X8</accession>
<accession>Q8VHD5</accession>
<accession>Q8VI58</accession>
<accession>Q9EQE7</accession>
<accession>Q9ESZ6</accession>
<accession>Q9ESZ7</accession>
<protein>
    <recommendedName>
        <fullName>General transcription factor II-I repeat domain-containing protein 1</fullName>
        <shortName>GTF2I repeat domain-containing protein 1</shortName>
    </recommendedName>
    <alternativeName>
        <fullName>Binding factor for early enhancer</fullName>
    </alternativeName>
</protein>
<feature type="chain" id="PRO_0000083871" description="General transcription factor II-I repeat domain-containing protein 1">
    <location>
        <begin position="1"/>
        <end position="1104"/>
    </location>
</feature>
<feature type="repeat" description="GTF2I-like 1">
    <location>
        <begin position="119"/>
        <end position="213"/>
    </location>
</feature>
<feature type="repeat" description="GTF2I-like 2">
    <location>
        <begin position="342"/>
        <end position="436"/>
    </location>
</feature>
<feature type="repeat" description="GTF2I-like 3">
    <location>
        <begin position="556"/>
        <end position="650"/>
    </location>
</feature>
<feature type="repeat" description="GTF2I-like 4">
    <location>
        <begin position="681"/>
        <end position="775"/>
    </location>
</feature>
<feature type="repeat" description="GTF2I-like 5">
    <location>
        <begin position="805"/>
        <end position="899"/>
    </location>
</feature>
<feature type="repeat" description="GTF2I-like 6">
    <location>
        <begin position="908"/>
        <end position="1002"/>
    </location>
</feature>
<feature type="region of interest" description="Disordered" evidence="4">
    <location>
        <begin position="509"/>
        <end position="559"/>
    </location>
</feature>
<feature type="region of interest" description="Disordered" evidence="4">
    <location>
        <begin position="783"/>
        <end position="802"/>
    </location>
</feature>
<feature type="region of interest" description="Disordered" evidence="4">
    <location>
        <begin position="1001"/>
        <end position="1044"/>
    </location>
</feature>
<feature type="region of interest" description="Disordered" evidence="4">
    <location>
        <begin position="1058"/>
        <end position="1104"/>
    </location>
</feature>
<feature type="short sequence motif" description="Nuclear localization signal" evidence="1">
    <location>
        <begin position="1012"/>
        <end position="1019"/>
    </location>
</feature>
<feature type="compositionally biased region" description="Basic and acidic residues" evidence="4">
    <location>
        <begin position="538"/>
        <end position="555"/>
    </location>
</feature>
<feature type="compositionally biased region" description="Low complexity" evidence="4">
    <location>
        <begin position="1021"/>
        <end position="1043"/>
    </location>
</feature>
<feature type="modified residue" description="Phosphoserine" evidence="2">
    <location>
        <position position="448"/>
    </location>
</feature>
<feature type="cross-link" description="Glycyl lysine isopeptide (Lys-Gly) (interchain with G-Cter in SUMO2)" evidence="2">
    <location>
        <position position="27"/>
    </location>
</feature>
<feature type="cross-link" description="Glycyl lysine isopeptide (Lys-Gly) (interchain with G-Cter in SUMO2)" evidence="2">
    <location>
        <position position="184"/>
    </location>
</feature>
<feature type="cross-link" description="Glycyl lysine isopeptide (Lys-Gly) (interchain with G-Cter in SUMO2)" evidence="2">
    <location>
        <position position="212"/>
    </location>
</feature>
<feature type="cross-link" description="Glycyl lysine isopeptide (Lys-Gly) (interchain with G-Cter in SUMO2)" evidence="2">
    <location>
        <position position="225"/>
    </location>
</feature>
<feature type="cross-link" description="Glycyl lysine isopeptide (Lys-Gly) (interchain with G-Cter in SUMO2)" evidence="2">
    <location>
        <position position="238"/>
    </location>
</feature>
<feature type="cross-link" description="Glycyl lysine isopeptide (Lys-Gly) (interchain with G-Cter in SUMO2)" evidence="2">
    <location>
        <position position="271"/>
    </location>
</feature>
<feature type="cross-link" description="Glycyl lysine isopeptide (Lys-Gly) (interchain with G-Cter in SUMO2)" evidence="2">
    <location>
        <position position="337"/>
    </location>
</feature>
<feature type="cross-link" description="Glycyl lysine isopeptide (Lys-Gly) (interchain with G-Cter in SUMO2)" evidence="2">
    <location>
        <position position="436"/>
    </location>
</feature>
<feature type="cross-link" description="Glycyl lysine isopeptide (Lys-Gly) (interchain with G-Cter in SUMO2)" evidence="2">
    <location>
        <position position="439"/>
    </location>
</feature>
<feature type="cross-link" description="Glycyl lysine isopeptide (Lys-Gly) (interchain with G-Cter in SUMO2)" evidence="2">
    <location>
        <position position="443"/>
    </location>
</feature>
<feature type="cross-link" description="Glycyl lysine isopeptide (Lys-Gly) (interchain with G-Cter in SUMO2)" evidence="2">
    <location>
        <position position="567"/>
    </location>
</feature>
<feature type="cross-link" description="Glycyl lysine isopeptide (Lys-Gly) (interchain with G-Cter in SUMO2)" evidence="2">
    <location>
        <position position="579"/>
    </location>
</feature>
<feature type="cross-link" description="Glycyl lysine isopeptide (Lys-Gly) (interchain with G-Cter in SUMO2)" evidence="2">
    <location>
        <position position="588"/>
    </location>
</feature>
<feature type="cross-link" description="Glycyl lysine isopeptide (Lys-Gly) (interchain with G-Cter in SUMO2)" evidence="2">
    <location>
        <position position="622"/>
    </location>
</feature>
<feature type="cross-link" description="Glycyl lysine isopeptide (Lys-Gly) (interchain with G-Cter in SUMO2)" evidence="2">
    <location>
        <position position="638"/>
    </location>
</feature>
<feature type="cross-link" description="Glycyl lysine isopeptide (Lys-Gly) (interchain with G-Cter in SUMO2)" evidence="2">
    <location>
        <position position="669"/>
    </location>
</feature>
<feature type="cross-link" description="Glycyl lysine isopeptide (Lys-Gly) (interchain with G-Cter in SUMO2)" evidence="2">
    <location>
        <position position="709"/>
    </location>
</feature>
<feature type="cross-link" description="Glycyl lysine isopeptide (Lys-Gly) (interchain with G-Cter in SUMO2)" evidence="2">
    <location>
        <position position="717"/>
    </location>
</feature>
<feature type="cross-link" description="Glycyl lysine isopeptide (Lys-Gly) (interchain with G-Cter in SUMO2)" evidence="2">
    <location>
        <position position="757"/>
    </location>
</feature>
<feature type="cross-link" description="Glycyl lysine isopeptide (Lys-Gly) (interchain with G-Cter in SUMO2)" evidence="2">
    <location>
        <position position="759"/>
    </location>
</feature>
<feature type="cross-link" description="Glycyl lysine isopeptide (Lys-Gly) (interchain with G-Cter in SUMO2)" evidence="2">
    <location>
        <position position="772"/>
    </location>
</feature>
<feature type="cross-link" description="Glycyl lysine isopeptide (Lys-Gly) (interchain with G-Cter in SUMO2)" evidence="2">
    <location>
        <position position="841"/>
    </location>
</feature>
<feature type="cross-link" description="Glycyl lysine isopeptide (Lys-Gly) (interchain with G-Cter in SUMO2)" evidence="2">
    <location>
        <position position="901"/>
    </location>
</feature>
<feature type="splice variant" id="VSP_021376" description="In isoform 6 and isoform 7." evidence="9">
    <location>
        <begin position="657"/>
        <end position="675"/>
    </location>
</feature>
<feature type="splice variant" id="VSP_021377" description="In isoform 9." evidence="9">
    <location>
        <begin position="703"/>
        <end position="800"/>
    </location>
</feature>
<feature type="splice variant" id="VSP_003874" description="In isoform 3, isoform 4, isoform 5, isoform 6 and isoform 7." evidence="8 9">
    <location>
        <begin position="774"/>
        <end position="800"/>
    </location>
</feature>
<feature type="splice variant" id="VSP_003875" description="In isoform 3, isoform 4, isoform 8 and isoform 10." evidence="8 9">
    <location>
        <begin position="864"/>
        <end position="966"/>
    </location>
</feature>
<feature type="splice variant" id="VSP_003876" description="In isoform 1, isoform 3, isoform 7, isoform 9 and isoform 10." evidence="7 8 9">
    <original>VKSRGSELHPNSVWPLPLPRAGPSTAPGTGRHWALRGTQPTTEGQAHPLVLPTR</original>
    <variation>QWPVYMVDYSGLNVQLPGPLDY</variation>
    <location>
        <begin position="1051"/>
        <end position="1104"/>
    </location>
</feature>
<feature type="sequence conflict" description="In Ref. 4; AAM02923." evidence="10" ref="4">
    <original>E</original>
    <variation>V</variation>
    <location>
        <position position="79"/>
    </location>
</feature>
<feature type="sequence conflict" description="In Ref. 1; AAF78367." evidence="10" ref="1">
    <original>N</original>
    <variation>D</variation>
    <location>
        <position position="94"/>
    </location>
</feature>
<feature type="sequence conflict" description="In Ref. 4; AAM02920." evidence="10" ref="4">
    <original>E</original>
    <variation>K</variation>
    <location>
        <position position="134"/>
    </location>
</feature>
<feature type="sequence conflict" description="In Ref. 1; AAF78367." evidence="10" ref="1">
    <original>S</original>
    <variation>F</variation>
    <location>
        <position position="252"/>
    </location>
</feature>
<feature type="sequence conflict" description="In Ref. 1; AAF78367." evidence="10" ref="1">
    <original>Y</original>
    <variation>H</variation>
    <location>
        <position position="258"/>
    </location>
</feature>
<feature type="sequence conflict" description="In Ref. 1; AAF78367." evidence="10" ref="1">
    <original>S</original>
    <variation>L</variation>
    <location>
        <position position="261"/>
    </location>
</feature>
<feature type="sequence conflict" description="In Ref. 1; AAF78367." evidence="10" ref="1">
    <original>D</original>
    <variation>G</variation>
    <location>
        <position position="283"/>
    </location>
</feature>
<feature type="sequence conflict" description="In Ref. 4; AAL68980." evidence="10" ref="4">
    <original>K</original>
    <variation>R</variation>
    <location>
        <position position="399"/>
    </location>
</feature>
<feature type="sequence conflict" description="In Ref. 4; AAM02920/AAP30731." evidence="10" ref="4">
    <original>L</original>
    <variation>F</variation>
    <location>
        <position position="821"/>
    </location>
</feature>
<feature type="sequence conflict" description="In Ref. 4; AAM02923." evidence="10" ref="4">
    <original>H</original>
    <variation>Y</variation>
    <location>
        <position position="881"/>
    </location>
</feature>
<feature type="sequence conflict" description="In Ref. 4; AAP30733/AAM02922." evidence="10" ref="4">
    <original>L</original>
    <variation>P</variation>
    <location>
        <position position="1058"/>
    </location>
</feature>
<comment type="function">
    <text evidence="5">May be a transcription regulator involved in cell-cycle progression and skeletal muscle differentiation. May repress GTF2I transcriptional functions, by preventing its nuclear residency, or by inhibiting its transcriptional activation. May contribute to slow-twitch fiber type specificity during myogenesis and in regenerating muscles. Binds troponin I slow-muscle fiber enhancer (USE B1). Binds specifically and with high affinity to the EFG sequences derived from the early enhancer of HOXC8.</text>
</comment>
<comment type="subunit">
    <text evidence="1">Interacts with the retinoblastoma protein (RB1) via its C-terminus.</text>
</comment>
<comment type="subcellular location">
    <subcellularLocation>
        <location evidence="3 6">Nucleus</location>
    </subcellularLocation>
</comment>
<comment type="alternative products">
    <event type="alternative splicing"/>
    <isoform>
        <id>Q9JI57-1</id>
        <name>2</name>
        <name>Beta</name>
        <name>3b7</name>
        <sequence type="displayed"/>
    </isoform>
    <isoform>
        <id>Q9JI57-2</id>
        <name>1</name>
        <name>Alpha</name>
        <name>3a7</name>
        <sequence type="described" ref="VSP_003876"/>
    </isoform>
    <isoform>
        <id>Q9JI57-3</id>
        <name>3</name>
        <name>Gamma</name>
        <name>1a1</name>
        <sequence type="described" ref="VSP_003874 VSP_003875 VSP_003876"/>
    </isoform>
    <isoform>
        <id>Q9JI57-4</id>
        <name>4</name>
        <name>1b1</name>
        <sequence type="described" ref="VSP_003874 VSP_003875"/>
    </isoform>
    <isoform>
        <id>Q9JI57-5</id>
        <name>5</name>
        <name>3b5</name>
        <sequence type="described" ref="VSP_003874"/>
    </isoform>
    <isoform>
        <id>Q9JI57-6</id>
        <name>6</name>
        <name>3b3</name>
        <sequence type="described" ref="VSP_021376 VSP_003874"/>
    </isoform>
    <isoform>
        <id>Q9JI57-7</id>
        <name>7</name>
        <name>3a3</name>
        <sequence type="described" ref="VSP_021376 VSP_003874 VSP_003876"/>
    </isoform>
    <isoform>
        <id>Q9JI57-8</id>
        <name>8</name>
        <name>1b4</name>
        <sequence type="described" ref="VSP_003875"/>
    </isoform>
    <isoform>
        <id>Q9JI57-9</id>
        <name>9</name>
        <name>2a5</name>
        <sequence type="described" ref="VSP_021377 VSP_003876"/>
    </isoform>
    <isoform>
        <id>Q9JI57-10</id>
        <name>10</name>
        <name>1a4</name>
        <sequence type="described" ref="VSP_003875 VSP_003876"/>
    </isoform>
</comment>
<comment type="tissue specificity">
    <text>Widely expressed.</text>
</comment>
<comment type="developmental stage">
    <text>Expressed in somites, neural tube and brain at 8-8.5 dpc. Expression remains constant from 9.5-12.5 dpc with highest expression levels in the limb buds, branchial arches, crainofacial area, brain and spinal cord.</text>
</comment>
<comment type="similarity">
    <text evidence="3">Belongs to the TFII-I family.</text>
</comment>
<comment type="sequence caution" evidence="10">
    <conflict type="frameshift">
        <sequence resource="EMBL-CDS" id="AAF78367"/>
    </conflict>
</comment>
<name>GT2D1_MOUSE</name>
<keyword id="KW-0025">Alternative splicing</keyword>
<keyword id="KW-0217">Developmental protein</keyword>
<keyword id="KW-0238">DNA-binding</keyword>
<keyword id="KW-1017">Isopeptide bond</keyword>
<keyword id="KW-0539">Nucleus</keyword>
<keyword id="KW-0597">Phosphoprotein</keyword>
<keyword id="KW-1185">Reference proteome</keyword>
<keyword id="KW-0677">Repeat</keyword>
<keyword id="KW-0804">Transcription</keyword>
<keyword id="KW-0805">Transcription regulation</keyword>
<keyword id="KW-0832">Ubl conjugation</keyword>